<proteinExistence type="inferred from homology"/>
<reference key="1">
    <citation type="journal article" date="2003" name="Science">
        <title>Genome of Geobacter sulfurreducens: metal reduction in subsurface environments.</title>
        <authorList>
            <person name="Methe B.A."/>
            <person name="Nelson K.E."/>
            <person name="Eisen J.A."/>
            <person name="Paulsen I.T."/>
            <person name="Nelson W.C."/>
            <person name="Heidelberg J.F."/>
            <person name="Wu D."/>
            <person name="Wu M."/>
            <person name="Ward N.L."/>
            <person name="Beanan M.J."/>
            <person name="Dodson R.J."/>
            <person name="Madupu R."/>
            <person name="Brinkac L.M."/>
            <person name="Daugherty S.C."/>
            <person name="DeBoy R.T."/>
            <person name="Durkin A.S."/>
            <person name="Gwinn M.L."/>
            <person name="Kolonay J.F."/>
            <person name="Sullivan S.A."/>
            <person name="Haft D.H."/>
            <person name="Selengut J."/>
            <person name="Davidsen T.M."/>
            <person name="Zafar N."/>
            <person name="White O."/>
            <person name="Tran B."/>
            <person name="Romero C."/>
            <person name="Forberger H.A."/>
            <person name="Weidman J.F."/>
            <person name="Khouri H.M."/>
            <person name="Feldblyum T.V."/>
            <person name="Utterback T.R."/>
            <person name="Van Aken S.E."/>
            <person name="Lovley D.R."/>
            <person name="Fraser C.M."/>
        </authorList>
    </citation>
    <scope>NUCLEOTIDE SEQUENCE [LARGE SCALE GENOMIC DNA]</scope>
    <source>
        <strain>ATCC 51573 / DSM 12127 / PCA</strain>
    </source>
</reference>
<comment type="function">
    <text evidence="1">Catalyzes the transfer of the enolpyruvyl moiety of phosphoenolpyruvate (PEP) to the 5-hydroxyl of shikimate-3-phosphate (S3P) to produce enolpyruvyl shikimate-3-phosphate and inorganic phosphate.</text>
</comment>
<comment type="catalytic activity">
    <reaction evidence="1">
        <text>3-phosphoshikimate + phosphoenolpyruvate = 5-O-(1-carboxyvinyl)-3-phosphoshikimate + phosphate</text>
        <dbReference type="Rhea" id="RHEA:21256"/>
        <dbReference type="ChEBI" id="CHEBI:43474"/>
        <dbReference type="ChEBI" id="CHEBI:57701"/>
        <dbReference type="ChEBI" id="CHEBI:58702"/>
        <dbReference type="ChEBI" id="CHEBI:145989"/>
        <dbReference type="EC" id="2.5.1.19"/>
    </reaction>
    <physiologicalReaction direction="left-to-right" evidence="1">
        <dbReference type="Rhea" id="RHEA:21257"/>
    </physiologicalReaction>
</comment>
<comment type="pathway">
    <text evidence="1">Metabolic intermediate biosynthesis; chorismate biosynthesis; chorismate from D-erythrose 4-phosphate and phosphoenolpyruvate: step 6/7.</text>
</comment>
<comment type="subunit">
    <text evidence="1">Monomer.</text>
</comment>
<comment type="subcellular location">
    <subcellularLocation>
        <location evidence="1">Cytoplasm</location>
    </subcellularLocation>
</comment>
<comment type="similarity">
    <text evidence="1">Belongs to the EPSP synthase family.</text>
</comment>
<dbReference type="EC" id="2.5.1.19" evidence="1"/>
<dbReference type="EMBL" id="AE017180">
    <property type="protein sequence ID" value="AAR35978.1"/>
    <property type="molecule type" value="Genomic_DNA"/>
</dbReference>
<dbReference type="RefSeq" id="NP_953651.1">
    <property type="nucleotide sequence ID" value="NC_002939.5"/>
</dbReference>
<dbReference type="RefSeq" id="WP_010943243.1">
    <property type="nucleotide sequence ID" value="NC_002939.5"/>
</dbReference>
<dbReference type="SMR" id="Q749Y6"/>
<dbReference type="FunCoup" id="Q749Y6">
    <property type="interactions" value="510"/>
</dbReference>
<dbReference type="STRING" id="243231.GSU2606"/>
<dbReference type="EnsemblBacteria" id="AAR35978">
    <property type="protein sequence ID" value="AAR35978"/>
    <property type="gene ID" value="GSU2606"/>
</dbReference>
<dbReference type="KEGG" id="gsu:GSU2606"/>
<dbReference type="PATRIC" id="fig|243231.5.peg.2636"/>
<dbReference type="eggNOG" id="COG0128">
    <property type="taxonomic scope" value="Bacteria"/>
</dbReference>
<dbReference type="HOGENOM" id="CLU_024321_0_1_7"/>
<dbReference type="InParanoid" id="Q749Y6"/>
<dbReference type="OrthoDB" id="9809920at2"/>
<dbReference type="UniPathway" id="UPA00053">
    <property type="reaction ID" value="UER00089"/>
</dbReference>
<dbReference type="Proteomes" id="UP000000577">
    <property type="component" value="Chromosome"/>
</dbReference>
<dbReference type="GO" id="GO:0005737">
    <property type="term" value="C:cytoplasm"/>
    <property type="evidence" value="ECO:0007669"/>
    <property type="project" value="UniProtKB-SubCell"/>
</dbReference>
<dbReference type="GO" id="GO:0003866">
    <property type="term" value="F:3-phosphoshikimate 1-carboxyvinyltransferase activity"/>
    <property type="evidence" value="ECO:0000318"/>
    <property type="project" value="GO_Central"/>
</dbReference>
<dbReference type="GO" id="GO:0008652">
    <property type="term" value="P:amino acid biosynthetic process"/>
    <property type="evidence" value="ECO:0007669"/>
    <property type="project" value="UniProtKB-KW"/>
</dbReference>
<dbReference type="GO" id="GO:0009073">
    <property type="term" value="P:aromatic amino acid family biosynthetic process"/>
    <property type="evidence" value="ECO:0007669"/>
    <property type="project" value="UniProtKB-KW"/>
</dbReference>
<dbReference type="GO" id="GO:0009423">
    <property type="term" value="P:chorismate biosynthetic process"/>
    <property type="evidence" value="ECO:0000318"/>
    <property type="project" value="GO_Central"/>
</dbReference>
<dbReference type="CDD" id="cd01556">
    <property type="entry name" value="EPSP_synthase"/>
    <property type="match status" value="1"/>
</dbReference>
<dbReference type="FunFam" id="3.65.10.10:FF:000005">
    <property type="entry name" value="3-phosphoshikimate 1-carboxyvinyltransferase"/>
    <property type="match status" value="1"/>
</dbReference>
<dbReference type="FunFam" id="3.65.10.10:FF:000006">
    <property type="entry name" value="3-phosphoshikimate 1-carboxyvinyltransferase"/>
    <property type="match status" value="1"/>
</dbReference>
<dbReference type="Gene3D" id="3.65.10.10">
    <property type="entry name" value="Enolpyruvate transferase domain"/>
    <property type="match status" value="2"/>
</dbReference>
<dbReference type="HAMAP" id="MF_00210">
    <property type="entry name" value="EPSP_synth"/>
    <property type="match status" value="1"/>
</dbReference>
<dbReference type="InterPro" id="IPR001986">
    <property type="entry name" value="Enolpyruvate_Tfrase_dom"/>
</dbReference>
<dbReference type="InterPro" id="IPR036968">
    <property type="entry name" value="Enolpyruvate_Tfrase_sf"/>
</dbReference>
<dbReference type="InterPro" id="IPR006264">
    <property type="entry name" value="EPSP_synthase"/>
</dbReference>
<dbReference type="InterPro" id="IPR023193">
    <property type="entry name" value="EPSP_synthase_CS"/>
</dbReference>
<dbReference type="InterPro" id="IPR013792">
    <property type="entry name" value="RNA3'P_cycl/enolpyr_Trfase_a/b"/>
</dbReference>
<dbReference type="NCBIfam" id="TIGR01356">
    <property type="entry name" value="aroA"/>
    <property type="match status" value="1"/>
</dbReference>
<dbReference type="PANTHER" id="PTHR21090">
    <property type="entry name" value="AROM/DEHYDROQUINATE SYNTHASE"/>
    <property type="match status" value="1"/>
</dbReference>
<dbReference type="PANTHER" id="PTHR21090:SF5">
    <property type="entry name" value="PENTAFUNCTIONAL AROM POLYPEPTIDE"/>
    <property type="match status" value="1"/>
</dbReference>
<dbReference type="Pfam" id="PF00275">
    <property type="entry name" value="EPSP_synthase"/>
    <property type="match status" value="1"/>
</dbReference>
<dbReference type="PIRSF" id="PIRSF000505">
    <property type="entry name" value="EPSPS"/>
    <property type="match status" value="1"/>
</dbReference>
<dbReference type="SUPFAM" id="SSF55205">
    <property type="entry name" value="EPT/RTPC-like"/>
    <property type="match status" value="1"/>
</dbReference>
<dbReference type="PROSITE" id="PS00104">
    <property type="entry name" value="EPSP_SYNTHASE_1"/>
    <property type="match status" value="1"/>
</dbReference>
<dbReference type="PROSITE" id="PS00885">
    <property type="entry name" value="EPSP_SYNTHASE_2"/>
    <property type="match status" value="1"/>
</dbReference>
<evidence type="ECO:0000255" key="1">
    <source>
        <dbReference type="HAMAP-Rule" id="MF_00210"/>
    </source>
</evidence>
<accession>Q749Y6</accession>
<sequence>MVSLSSHPARALRGEIAVPGDKSISHRSIMLGSIARGVTTVSGFLRGEDNIATLDAFRAMGVQVHDDGETLRIEGKGLHGLTEAEDVIDCGNSGTSIRLLTGLMAAQRFYTVLTGDRYLRRRPMRRVVEPLSRMGACIHGRDNGEKAPLAIVGRPLTGIAYDSPVASAQVKSALMLAGLYADGATRVTEPHLSRDHSERMFRHFGARLETDAAGVTVYGGHELDGRDIVVPGDISSAAFFLVAALIVPGSELLIRGVGVNPTRTGILDILAAMGGSVELLDQREVSGEPVADLLVRSSALKGIEIGGDVVPRAIDEFPVICVAAALAEGTTVIRDARELRVKETDRIAAMAANLRAAGATITETADGMIIEGTGRLNGVTVESFGDHRIAMSMLVAGLAASGAITVSDTECIATSFPTFTALLDKVAVR</sequence>
<feature type="chain" id="PRO_0000325347" description="3-phosphoshikimate 1-carboxyvinyltransferase">
    <location>
        <begin position="1"/>
        <end position="429"/>
    </location>
</feature>
<feature type="active site" description="Proton acceptor" evidence="1">
    <location>
        <position position="315"/>
    </location>
</feature>
<feature type="binding site" evidence="1">
    <location>
        <position position="22"/>
    </location>
    <ligand>
        <name>3-phosphoshikimate</name>
        <dbReference type="ChEBI" id="CHEBI:145989"/>
    </ligand>
</feature>
<feature type="binding site" evidence="1">
    <location>
        <position position="22"/>
    </location>
    <ligand>
        <name>phosphoenolpyruvate</name>
        <dbReference type="ChEBI" id="CHEBI:58702"/>
    </ligand>
</feature>
<feature type="binding site" evidence="1">
    <location>
        <position position="23"/>
    </location>
    <ligand>
        <name>3-phosphoshikimate</name>
        <dbReference type="ChEBI" id="CHEBI:145989"/>
    </ligand>
</feature>
<feature type="binding site" evidence="1">
    <location>
        <position position="27"/>
    </location>
    <ligand>
        <name>3-phosphoshikimate</name>
        <dbReference type="ChEBI" id="CHEBI:145989"/>
    </ligand>
</feature>
<feature type="binding site" evidence="1">
    <location>
        <position position="94"/>
    </location>
    <ligand>
        <name>phosphoenolpyruvate</name>
        <dbReference type="ChEBI" id="CHEBI:58702"/>
    </ligand>
</feature>
<feature type="binding site" evidence="1">
    <location>
        <position position="122"/>
    </location>
    <ligand>
        <name>phosphoenolpyruvate</name>
        <dbReference type="ChEBI" id="CHEBI:58702"/>
    </ligand>
</feature>
<feature type="binding site" evidence="1">
    <location>
        <position position="167"/>
    </location>
    <ligand>
        <name>3-phosphoshikimate</name>
        <dbReference type="ChEBI" id="CHEBI:145989"/>
    </ligand>
</feature>
<feature type="binding site" evidence="1">
    <location>
        <position position="169"/>
    </location>
    <ligand>
        <name>3-phosphoshikimate</name>
        <dbReference type="ChEBI" id="CHEBI:145989"/>
    </ligand>
</feature>
<feature type="binding site" evidence="1">
    <location>
        <position position="169"/>
    </location>
    <ligand>
        <name>phosphoenolpyruvate</name>
        <dbReference type="ChEBI" id="CHEBI:58702"/>
    </ligand>
</feature>
<feature type="binding site" evidence="1">
    <location>
        <position position="315"/>
    </location>
    <ligand>
        <name>3-phosphoshikimate</name>
        <dbReference type="ChEBI" id="CHEBI:145989"/>
    </ligand>
</feature>
<feature type="binding site" evidence="1">
    <location>
        <position position="342"/>
    </location>
    <ligand>
        <name>3-phosphoshikimate</name>
        <dbReference type="ChEBI" id="CHEBI:145989"/>
    </ligand>
</feature>
<feature type="binding site" evidence="1">
    <location>
        <position position="346"/>
    </location>
    <ligand>
        <name>phosphoenolpyruvate</name>
        <dbReference type="ChEBI" id="CHEBI:58702"/>
    </ligand>
</feature>
<feature type="binding site" evidence="1">
    <location>
        <position position="388"/>
    </location>
    <ligand>
        <name>phosphoenolpyruvate</name>
        <dbReference type="ChEBI" id="CHEBI:58702"/>
    </ligand>
</feature>
<keyword id="KW-0028">Amino-acid biosynthesis</keyword>
<keyword id="KW-0057">Aromatic amino acid biosynthesis</keyword>
<keyword id="KW-0963">Cytoplasm</keyword>
<keyword id="KW-1185">Reference proteome</keyword>
<keyword id="KW-0808">Transferase</keyword>
<protein>
    <recommendedName>
        <fullName evidence="1">3-phosphoshikimate 1-carboxyvinyltransferase</fullName>
        <ecNumber evidence="1">2.5.1.19</ecNumber>
    </recommendedName>
    <alternativeName>
        <fullName evidence="1">5-enolpyruvylshikimate-3-phosphate synthase</fullName>
        <shortName evidence="1">EPSP synthase</shortName>
        <shortName evidence="1">EPSPS</shortName>
    </alternativeName>
</protein>
<gene>
    <name evidence="1" type="primary">aroA</name>
    <name type="ordered locus">GSU2606</name>
</gene>
<name>AROA_GEOSL</name>
<organism>
    <name type="scientific">Geobacter sulfurreducens (strain ATCC 51573 / DSM 12127 / PCA)</name>
    <dbReference type="NCBI Taxonomy" id="243231"/>
    <lineage>
        <taxon>Bacteria</taxon>
        <taxon>Pseudomonadati</taxon>
        <taxon>Thermodesulfobacteriota</taxon>
        <taxon>Desulfuromonadia</taxon>
        <taxon>Geobacterales</taxon>
        <taxon>Geobacteraceae</taxon>
        <taxon>Geobacter</taxon>
    </lineage>
</organism>